<comment type="function">
    <text evidence="1">Catalyzes the reversible oxidation of malate to oxaloacetate.</text>
</comment>
<comment type="catalytic activity">
    <reaction evidence="1">
        <text>(S)-malate + NAD(+) = oxaloacetate + NADH + H(+)</text>
        <dbReference type="Rhea" id="RHEA:21432"/>
        <dbReference type="ChEBI" id="CHEBI:15378"/>
        <dbReference type="ChEBI" id="CHEBI:15589"/>
        <dbReference type="ChEBI" id="CHEBI:16452"/>
        <dbReference type="ChEBI" id="CHEBI:57540"/>
        <dbReference type="ChEBI" id="CHEBI:57945"/>
        <dbReference type="EC" id="1.1.1.37"/>
    </reaction>
</comment>
<comment type="similarity">
    <text evidence="3">Belongs to the LDH/MDH superfamily.</text>
</comment>
<accession>Q8TSH7</accession>
<dbReference type="EC" id="1.1.1.37" evidence="1"/>
<dbReference type="EMBL" id="AE010299">
    <property type="protein sequence ID" value="AAM04258.1"/>
    <property type="molecule type" value="Genomic_DNA"/>
</dbReference>
<dbReference type="RefSeq" id="WP_011020863.1">
    <property type="nucleotide sequence ID" value="NC_003552.1"/>
</dbReference>
<dbReference type="SMR" id="Q8TSH7"/>
<dbReference type="FunCoup" id="Q8TSH7">
    <property type="interactions" value="115"/>
</dbReference>
<dbReference type="STRING" id="188937.MA_0819"/>
<dbReference type="EnsemblBacteria" id="AAM04258">
    <property type="protein sequence ID" value="AAM04258"/>
    <property type="gene ID" value="MA_0819"/>
</dbReference>
<dbReference type="GeneID" id="1472711"/>
<dbReference type="KEGG" id="mac:MA_0819"/>
<dbReference type="HOGENOM" id="CLU_045401_2_1_2"/>
<dbReference type="InParanoid" id="Q8TSH7"/>
<dbReference type="OrthoDB" id="2596at2157"/>
<dbReference type="PhylomeDB" id="Q8TSH7"/>
<dbReference type="Proteomes" id="UP000002487">
    <property type="component" value="Chromosome"/>
</dbReference>
<dbReference type="GO" id="GO:0005737">
    <property type="term" value="C:cytoplasm"/>
    <property type="evidence" value="ECO:0000318"/>
    <property type="project" value="GO_Central"/>
</dbReference>
<dbReference type="GO" id="GO:0030060">
    <property type="term" value="F:L-malate dehydrogenase (NAD+) activity"/>
    <property type="evidence" value="ECO:0000318"/>
    <property type="project" value="GO_Central"/>
</dbReference>
<dbReference type="GO" id="GO:0019752">
    <property type="term" value="P:carboxylic acid metabolic process"/>
    <property type="evidence" value="ECO:0007669"/>
    <property type="project" value="InterPro"/>
</dbReference>
<dbReference type="GO" id="GO:0006099">
    <property type="term" value="P:tricarboxylic acid cycle"/>
    <property type="evidence" value="ECO:0007669"/>
    <property type="project" value="UniProtKB-KW"/>
</dbReference>
<dbReference type="CDD" id="cd01339">
    <property type="entry name" value="LDH-like_MDH"/>
    <property type="match status" value="1"/>
</dbReference>
<dbReference type="FunFam" id="3.40.50.720:FF:000018">
    <property type="entry name" value="Malate dehydrogenase"/>
    <property type="match status" value="1"/>
</dbReference>
<dbReference type="FunFam" id="3.90.110.10:FF:000004">
    <property type="entry name" value="Malate dehydrogenase"/>
    <property type="match status" value="1"/>
</dbReference>
<dbReference type="Gene3D" id="3.90.110.10">
    <property type="entry name" value="Lactate dehydrogenase/glycoside hydrolase, family 4, C-terminal"/>
    <property type="match status" value="1"/>
</dbReference>
<dbReference type="Gene3D" id="3.40.50.720">
    <property type="entry name" value="NAD(P)-binding Rossmann-like Domain"/>
    <property type="match status" value="1"/>
</dbReference>
<dbReference type="HAMAP" id="MF_00487">
    <property type="entry name" value="Malate_dehydrog_3"/>
    <property type="match status" value="1"/>
</dbReference>
<dbReference type="InterPro" id="IPR001557">
    <property type="entry name" value="L-lactate/malate_DH"/>
</dbReference>
<dbReference type="InterPro" id="IPR022383">
    <property type="entry name" value="Lactate/malate_DH_C"/>
</dbReference>
<dbReference type="InterPro" id="IPR001236">
    <property type="entry name" value="Lactate/malate_DH_N"/>
</dbReference>
<dbReference type="InterPro" id="IPR015955">
    <property type="entry name" value="Lactate_DH/Glyco_Ohase_4_C"/>
</dbReference>
<dbReference type="InterPro" id="IPR011275">
    <property type="entry name" value="Malate_DH_type3"/>
</dbReference>
<dbReference type="InterPro" id="IPR036291">
    <property type="entry name" value="NAD(P)-bd_dom_sf"/>
</dbReference>
<dbReference type="NCBIfam" id="TIGR01763">
    <property type="entry name" value="MalateDH_bact"/>
    <property type="match status" value="1"/>
</dbReference>
<dbReference type="NCBIfam" id="NF004863">
    <property type="entry name" value="PRK06223.1"/>
    <property type="match status" value="1"/>
</dbReference>
<dbReference type="PANTHER" id="PTHR43128">
    <property type="entry name" value="L-2-HYDROXYCARBOXYLATE DEHYDROGENASE (NAD(P)(+))"/>
    <property type="match status" value="1"/>
</dbReference>
<dbReference type="PANTHER" id="PTHR43128:SF16">
    <property type="entry name" value="L-LACTATE DEHYDROGENASE"/>
    <property type="match status" value="1"/>
</dbReference>
<dbReference type="Pfam" id="PF02866">
    <property type="entry name" value="Ldh_1_C"/>
    <property type="match status" value="1"/>
</dbReference>
<dbReference type="Pfam" id="PF00056">
    <property type="entry name" value="Ldh_1_N"/>
    <property type="match status" value="1"/>
</dbReference>
<dbReference type="PIRSF" id="PIRSF000102">
    <property type="entry name" value="Lac_mal_DH"/>
    <property type="match status" value="1"/>
</dbReference>
<dbReference type="PRINTS" id="PR00086">
    <property type="entry name" value="LLDHDRGNASE"/>
</dbReference>
<dbReference type="SUPFAM" id="SSF56327">
    <property type="entry name" value="LDH C-terminal domain-like"/>
    <property type="match status" value="1"/>
</dbReference>
<dbReference type="SUPFAM" id="SSF51735">
    <property type="entry name" value="NAD(P)-binding Rossmann-fold domains"/>
    <property type="match status" value="1"/>
</dbReference>
<keyword id="KW-0520">NAD</keyword>
<keyword id="KW-0560">Oxidoreductase</keyword>
<keyword id="KW-1185">Reference proteome</keyword>
<keyword id="KW-0816">Tricarboxylic acid cycle</keyword>
<name>MDH_METAC</name>
<proteinExistence type="inferred from homology"/>
<organism>
    <name type="scientific">Methanosarcina acetivorans (strain ATCC 35395 / DSM 2834 / JCM 12185 / C2A)</name>
    <dbReference type="NCBI Taxonomy" id="188937"/>
    <lineage>
        <taxon>Archaea</taxon>
        <taxon>Methanobacteriati</taxon>
        <taxon>Methanobacteriota</taxon>
        <taxon>Stenosarchaea group</taxon>
        <taxon>Methanomicrobia</taxon>
        <taxon>Methanosarcinales</taxon>
        <taxon>Methanosarcinaceae</taxon>
        <taxon>Methanosarcina</taxon>
    </lineage>
</organism>
<sequence>MAKISVIGAGNVGATTVQRLAELEPGEIVMTDIVEGLPQGKALDLMQAGAINGYDTQVTGTNDYADITDSDLVIITAGIARKPGMTREDLMKTNSKIIGEVSRNIAEYAPNSIVINVTNPLDVITYVAMKTTGFETKKVFGMSGVLDAGRFASFIAEELNCSKKDIEAMVIGGHGDLMVPLPQYTTVSGIPLPELLPEETIARLVERTVNGGAEIVGLLKQGSAFYAPSAAIVSVAEAVLKDSKRILPTSAYLEGQYGQEGIYFGVLAKLGANGVEEVLELKLEENQYEILRKSSETIKRGISKLGI</sequence>
<feature type="chain" id="PRO_0000113484" description="Malate dehydrogenase">
    <location>
        <begin position="1"/>
        <end position="307"/>
    </location>
</feature>
<feature type="active site" description="Proton acceptor" evidence="2">
    <location>
        <position position="174"/>
    </location>
</feature>
<feature type="binding site" evidence="1">
    <location>
        <begin position="8"/>
        <end position="13"/>
    </location>
    <ligand>
        <name>NAD(+)</name>
        <dbReference type="ChEBI" id="CHEBI:57540"/>
    </ligand>
</feature>
<feature type="binding site" evidence="1">
    <location>
        <position position="32"/>
    </location>
    <ligand>
        <name>NAD(+)</name>
        <dbReference type="ChEBI" id="CHEBI:57540"/>
    </ligand>
</feature>
<feature type="binding site" evidence="2">
    <location>
        <position position="81"/>
    </location>
    <ligand>
        <name>substrate</name>
    </ligand>
</feature>
<feature type="binding site" evidence="2">
    <location>
        <position position="87"/>
    </location>
    <ligand>
        <name>substrate</name>
    </ligand>
</feature>
<feature type="binding site" evidence="1">
    <location>
        <position position="94"/>
    </location>
    <ligand>
        <name>NAD(+)</name>
        <dbReference type="ChEBI" id="CHEBI:57540"/>
    </ligand>
</feature>
<feature type="binding site" evidence="1">
    <location>
        <begin position="117"/>
        <end position="119"/>
    </location>
    <ligand>
        <name>NAD(+)</name>
        <dbReference type="ChEBI" id="CHEBI:57540"/>
    </ligand>
</feature>
<feature type="binding site" evidence="2">
    <location>
        <position position="119"/>
    </location>
    <ligand>
        <name>substrate</name>
    </ligand>
</feature>
<feature type="binding site" evidence="2">
    <location>
        <position position="150"/>
    </location>
    <ligand>
        <name>substrate</name>
    </ligand>
</feature>
<evidence type="ECO:0000250" key="1">
    <source>
        <dbReference type="UniProtKB" id="O08349"/>
    </source>
</evidence>
<evidence type="ECO:0000250" key="2">
    <source>
        <dbReference type="UniProtKB" id="P61889"/>
    </source>
</evidence>
<evidence type="ECO:0000305" key="3"/>
<protein>
    <recommendedName>
        <fullName evidence="1">Malate dehydrogenase</fullName>
        <ecNumber evidence="1">1.1.1.37</ecNumber>
    </recommendedName>
</protein>
<gene>
    <name type="primary">mdh</name>
    <name type="ordered locus">MA_0819</name>
</gene>
<reference key="1">
    <citation type="journal article" date="2002" name="Genome Res.">
        <title>The genome of Methanosarcina acetivorans reveals extensive metabolic and physiological diversity.</title>
        <authorList>
            <person name="Galagan J.E."/>
            <person name="Nusbaum C."/>
            <person name="Roy A."/>
            <person name="Endrizzi M.G."/>
            <person name="Macdonald P."/>
            <person name="FitzHugh W."/>
            <person name="Calvo S."/>
            <person name="Engels R."/>
            <person name="Smirnov S."/>
            <person name="Atnoor D."/>
            <person name="Brown A."/>
            <person name="Allen N."/>
            <person name="Naylor J."/>
            <person name="Stange-Thomann N."/>
            <person name="DeArellano K."/>
            <person name="Johnson R."/>
            <person name="Linton L."/>
            <person name="McEwan P."/>
            <person name="McKernan K."/>
            <person name="Talamas J."/>
            <person name="Tirrell A."/>
            <person name="Ye W."/>
            <person name="Zimmer A."/>
            <person name="Barber R.D."/>
            <person name="Cann I."/>
            <person name="Graham D.E."/>
            <person name="Grahame D.A."/>
            <person name="Guss A.M."/>
            <person name="Hedderich R."/>
            <person name="Ingram-Smith C."/>
            <person name="Kuettner H.C."/>
            <person name="Krzycki J.A."/>
            <person name="Leigh J.A."/>
            <person name="Li W."/>
            <person name="Liu J."/>
            <person name="Mukhopadhyay B."/>
            <person name="Reeve J.N."/>
            <person name="Smith K."/>
            <person name="Springer T.A."/>
            <person name="Umayam L.A."/>
            <person name="White O."/>
            <person name="White R.H."/>
            <person name="de Macario E.C."/>
            <person name="Ferry J.G."/>
            <person name="Jarrell K.F."/>
            <person name="Jing H."/>
            <person name="Macario A.J.L."/>
            <person name="Paulsen I.T."/>
            <person name="Pritchett M."/>
            <person name="Sowers K.R."/>
            <person name="Swanson R.V."/>
            <person name="Zinder S.H."/>
            <person name="Lander E."/>
            <person name="Metcalf W.W."/>
            <person name="Birren B."/>
        </authorList>
    </citation>
    <scope>NUCLEOTIDE SEQUENCE [LARGE SCALE GENOMIC DNA]</scope>
    <source>
        <strain>ATCC 35395 / DSM 2834 / JCM 12185 / C2A</strain>
    </source>
</reference>